<comment type="function">
    <text evidence="1 2 3">Reversibly phosphorolyzes lacto-N-biose to Gal1-P and N-acetylglucosamine (GlcNAc) and galacto-N-biose to Gal1-P and N-acetylgalactosamine (GalNAc). Involved in the lacto-N-biose I/galacto-N-biose (LNB/GNB) degradation pathway, which is important for host intestinal colonization by bifidobacteria.</text>
</comment>
<comment type="catalytic activity">
    <reaction evidence="1 3">
        <text>beta-D-galactosyl-(1-&gt;3)-N-acetyl-D-glucosamine + phosphate = alpha-D-galactose 1-phosphate + N-acetyl-D-glucosamine</text>
        <dbReference type="Rhea" id="RHEA:20285"/>
        <dbReference type="ChEBI" id="CHEBI:27707"/>
        <dbReference type="ChEBI" id="CHEBI:43474"/>
        <dbReference type="ChEBI" id="CHEBI:58336"/>
        <dbReference type="ChEBI" id="CHEBI:506227"/>
        <dbReference type="EC" id="2.4.1.211"/>
    </reaction>
</comment>
<comment type="subunit">
    <text evidence="3">Homodimer.</text>
</comment>
<comment type="similarity">
    <text evidence="4">Belongs to the glycoside hydrolase 112 family.</text>
</comment>
<feature type="chain" id="PRO_0000424070" description="1,3-beta-galactosyl-N-acetylhexosamine phosphorylase">
    <location>
        <begin position="1"/>
        <end position="751"/>
    </location>
</feature>
<feature type="active site" description="Proton donor" evidence="5">
    <location>
        <position position="313"/>
    </location>
</feature>
<feature type="mutagenesis site" description="Lack of activity." evidence="3">
    <original>R</original>
    <variation>E</variation>
    <location>
        <position position="32"/>
    </location>
</feature>
<feature type="mutagenesis site" description="Strong decrease in activity." evidence="3">
    <original>N</original>
    <variation>A</variation>
    <location>
        <position position="166"/>
    </location>
</feature>
<feature type="mutagenesis site" description="Lack of activity." evidence="3">
    <original>R</original>
    <variation>E</variation>
    <location>
        <position position="210"/>
    </location>
</feature>
<feature type="mutagenesis site" description="Lack of activity." evidence="3">
    <original>R</original>
    <variation>E</variation>
    <location>
        <position position="358"/>
    </location>
</feature>
<feature type="mutagenesis site" description="Strong decrease in activity." evidence="3">
    <original>Y</original>
    <variation>F</variation>
    <location>
        <position position="362"/>
    </location>
</feature>
<feature type="mutagenesis site" description="Lack of activity." evidence="3">
    <original>Y</original>
    <variation>N</variation>
    <location>
        <position position="362"/>
    </location>
</feature>
<feature type="mutagenesis site" description="Decrease in activity." evidence="3">
    <original>F</original>
    <variation>N</variation>
    <location>
        <position position="364"/>
    </location>
</feature>
<feature type="strand" evidence="6">
    <location>
        <begin position="6"/>
        <end position="10"/>
    </location>
</feature>
<feature type="helix" evidence="6">
    <location>
        <begin position="16"/>
        <end position="26"/>
    </location>
</feature>
<feature type="strand" evidence="6">
    <location>
        <begin position="29"/>
        <end position="32"/>
    </location>
</feature>
<feature type="helix" evidence="6">
    <location>
        <begin position="43"/>
        <end position="46"/>
    </location>
</feature>
<feature type="strand" evidence="6">
    <location>
        <begin position="49"/>
        <end position="54"/>
    </location>
</feature>
<feature type="helix" evidence="6">
    <location>
        <begin position="61"/>
        <end position="64"/>
    </location>
</feature>
<feature type="helix" evidence="6">
    <location>
        <begin position="68"/>
        <end position="70"/>
    </location>
</feature>
<feature type="strand" evidence="6">
    <location>
        <begin position="73"/>
        <end position="77"/>
    </location>
</feature>
<feature type="strand" evidence="6">
    <location>
        <begin position="84"/>
        <end position="93"/>
    </location>
</feature>
<feature type="turn" evidence="6">
    <location>
        <begin position="98"/>
        <end position="100"/>
    </location>
</feature>
<feature type="strand" evidence="6">
    <location>
        <begin position="101"/>
        <end position="103"/>
    </location>
</feature>
<feature type="helix" evidence="6">
    <location>
        <begin position="109"/>
        <end position="112"/>
    </location>
</feature>
<feature type="strand" evidence="6">
    <location>
        <begin position="114"/>
        <end position="117"/>
    </location>
</feature>
<feature type="turn" evidence="6">
    <location>
        <begin position="118"/>
        <end position="121"/>
    </location>
</feature>
<feature type="strand" evidence="6">
    <location>
        <begin position="122"/>
        <end position="124"/>
    </location>
</feature>
<feature type="helix" evidence="6">
    <location>
        <begin position="126"/>
        <end position="128"/>
    </location>
</feature>
<feature type="strand" evidence="6">
    <location>
        <begin position="129"/>
        <end position="131"/>
    </location>
</feature>
<feature type="strand" evidence="6">
    <location>
        <begin position="133"/>
        <end position="142"/>
    </location>
</feature>
<feature type="strand" evidence="6">
    <location>
        <begin position="148"/>
        <end position="157"/>
    </location>
</feature>
<feature type="helix" evidence="6">
    <location>
        <begin position="161"/>
        <end position="169"/>
    </location>
</feature>
<feature type="helix" evidence="6">
    <location>
        <begin position="186"/>
        <end position="201"/>
    </location>
</feature>
<feature type="strand" evidence="6">
    <location>
        <begin position="208"/>
        <end position="212"/>
    </location>
</feature>
<feature type="strand" evidence="6">
    <location>
        <begin position="219"/>
        <end position="222"/>
    </location>
</feature>
<feature type="strand" evidence="6">
    <location>
        <begin position="226"/>
        <end position="232"/>
    </location>
</feature>
<feature type="helix" evidence="6">
    <location>
        <begin position="237"/>
        <end position="239"/>
    </location>
</feature>
<feature type="helix" evidence="6">
    <location>
        <begin position="242"/>
        <end position="252"/>
    </location>
</feature>
<feature type="helix" evidence="6">
    <location>
        <begin position="259"/>
        <end position="262"/>
    </location>
</feature>
<feature type="helix" evidence="6">
    <location>
        <begin position="263"/>
        <end position="265"/>
    </location>
</feature>
<feature type="turn" evidence="6">
    <location>
        <begin position="266"/>
        <end position="268"/>
    </location>
</feature>
<feature type="helix" evidence="6">
    <location>
        <begin position="276"/>
        <end position="302"/>
    </location>
</feature>
<feature type="strand" evidence="6">
    <location>
        <begin position="306"/>
        <end position="314"/>
    </location>
</feature>
<feature type="turn" evidence="6">
    <location>
        <begin position="316"/>
        <end position="318"/>
    </location>
</feature>
<feature type="helix" evidence="6">
    <location>
        <begin position="325"/>
        <end position="328"/>
    </location>
</feature>
<feature type="strand" evidence="6">
    <location>
        <begin position="332"/>
        <end position="339"/>
    </location>
</feature>
<feature type="helix" evidence="6">
    <location>
        <begin position="340"/>
        <end position="347"/>
    </location>
</feature>
<feature type="strand" evidence="6">
    <location>
        <begin position="351"/>
        <end position="361"/>
    </location>
</feature>
<feature type="turn" evidence="6">
    <location>
        <begin position="365"/>
        <end position="367"/>
    </location>
</feature>
<feature type="helix" evidence="6">
    <location>
        <begin position="375"/>
        <end position="391"/>
    </location>
</feature>
<feature type="strand" evidence="6">
    <location>
        <begin position="395"/>
        <end position="398"/>
    </location>
</feature>
<feature type="helix" evidence="6">
    <location>
        <begin position="403"/>
        <end position="407"/>
    </location>
</feature>
<feature type="helix" evidence="6">
    <location>
        <begin position="410"/>
        <end position="430"/>
    </location>
</feature>
<feature type="strand" evidence="6">
    <location>
        <begin position="439"/>
        <end position="447"/>
    </location>
</feature>
<feature type="helix" evidence="6">
    <location>
        <begin position="448"/>
        <end position="451"/>
    </location>
</feature>
<feature type="turn" evidence="6">
    <location>
        <begin position="452"/>
        <end position="456"/>
    </location>
</feature>
<feature type="turn" evidence="6">
    <location>
        <begin position="465"/>
        <end position="467"/>
    </location>
</feature>
<feature type="helix" evidence="6">
    <location>
        <begin position="468"/>
        <end position="478"/>
    </location>
</feature>
<feature type="strand" evidence="6">
    <location>
        <begin position="480"/>
        <end position="488"/>
    </location>
</feature>
<feature type="helix" evidence="6">
    <location>
        <begin position="489"/>
        <end position="495"/>
    </location>
</feature>
<feature type="strand" evidence="6">
    <location>
        <begin position="503"/>
        <end position="508"/>
    </location>
</feature>
<feature type="turn" evidence="6">
    <location>
        <begin position="513"/>
        <end position="515"/>
    </location>
</feature>
<feature type="helix" evidence="6">
    <location>
        <begin position="517"/>
        <end position="521"/>
    </location>
</feature>
<feature type="helix" evidence="6">
    <location>
        <begin position="523"/>
        <end position="534"/>
    </location>
</feature>
<feature type="strand" evidence="6">
    <location>
        <begin position="538"/>
        <end position="544"/>
    </location>
</feature>
<feature type="strand" evidence="6">
    <location>
        <begin position="547"/>
        <end position="552"/>
    </location>
</feature>
<feature type="strand" evidence="6">
    <location>
        <begin position="555"/>
        <end position="557"/>
    </location>
</feature>
<feature type="helix" evidence="6">
    <location>
        <begin position="560"/>
        <end position="563"/>
    </location>
</feature>
<feature type="strand" evidence="6">
    <location>
        <begin position="564"/>
        <end position="567"/>
    </location>
</feature>
<feature type="turn" evidence="6">
    <location>
        <begin position="587"/>
        <end position="591"/>
    </location>
</feature>
<feature type="helix" evidence="6">
    <location>
        <begin position="596"/>
        <end position="605"/>
    </location>
</feature>
<feature type="turn" evidence="6">
    <location>
        <begin position="612"/>
        <end position="614"/>
    </location>
</feature>
<feature type="strand" evidence="6">
    <location>
        <begin position="619"/>
        <end position="621"/>
    </location>
</feature>
<feature type="strand" evidence="6">
    <location>
        <begin position="635"/>
        <end position="639"/>
    </location>
</feature>
<feature type="strand" evidence="6">
    <location>
        <begin position="642"/>
        <end position="646"/>
    </location>
</feature>
<feature type="helix" evidence="7">
    <location>
        <begin position="648"/>
        <end position="650"/>
    </location>
</feature>
<feature type="strand" evidence="6">
    <location>
        <begin position="653"/>
        <end position="659"/>
    </location>
</feature>
<feature type="strand" evidence="6">
    <location>
        <begin position="662"/>
        <end position="668"/>
    </location>
</feature>
<feature type="helix" evidence="6">
    <location>
        <begin position="674"/>
        <end position="687"/>
    </location>
</feature>
<feature type="helix" evidence="6">
    <location>
        <begin position="691"/>
        <end position="694"/>
    </location>
</feature>
<feature type="strand" evidence="6">
    <location>
        <begin position="698"/>
        <end position="701"/>
    </location>
</feature>
<feature type="strand" evidence="6">
    <location>
        <begin position="704"/>
        <end position="709"/>
    </location>
</feature>
<feature type="turn" evidence="6">
    <location>
        <begin position="710"/>
        <end position="713"/>
    </location>
</feature>
<feature type="strand" evidence="6">
    <location>
        <begin position="714"/>
        <end position="719"/>
    </location>
</feature>
<feature type="strand" evidence="6">
    <location>
        <begin position="721"/>
        <end position="723"/>
    </location>
</feature>
<feature type="strand" evidence="6">
    <location>
        <begin position="725"/>
        <end position="730"/>
    </location>
</feature>
<feature type="strand" evidence="6">
    <location>
        <begin position="736"/>
        <end position="741"/>
    </location>
</feature>
<feature type="strand" evidence="6">
    <location>
        <begin position="746"/>
        <end position="749"/>
    </location>
</feature>
<dbReference type="EC" id="2.4.1.211"/>
<dbReference type="EMBL" id="AB181926">
    <property type="protein sequence ID" value="BAD80751.1"/>
    <property type="molecule type" value="Genomic_DNA"/>
</dbReference>
<dbReference type="EMBL" id="AB303839">
    <property type="protein sequence ID" value="BAF73924.1"/>
    <property type="molecule type" value="Genomic_DNA"/>
</dbReference>
<dbReference type="EMBL" id="AP010888">
    <property type="protein sequence ID" value="BAJ67290.1"/>
    <property type="molecule type" value="Genomic_DNA"/>
</dbReference>
<dbReference type="PDB" id="2ZUS">
    <property type="method" value="X-ray"/>
    <property type="resolution" value="2.11 A"/>
    <property type="chains" value="A/B/C/D=1-751"/>
</dbReference>
<dbReference type="PDB" id="2ZUT">
    <property type="method" value="X-ray"/>
    <property type="resolution" value="1.90 A"/>
    <property type="chains" value="A/B/C/D=1-751"/>
</dbReference>
<dbReference type="PDB" id="2ZUU">
    <property type="method" value="X-ray"/>
    <property type="resolution" value="2.30 A"/>
    <property type="chains" value="A/B/C/D=1-751"/>
</dbReference>
<dbReference type="PDB" id="2ZUV">
    <property type="method" value="X-ray"/>
    <property type="resolution" value="1.85 A"/>
    <property type="chains" value="A/B=1-751"/>
</dbReference>
<dbReference type="PDB" id="2ZUW">
    <property type="method" value="X-ray"/>
    <property type="resolution" value="2.11 A"/>
    <property type="chains" value="A/B/C/D=1-751"/>
</dbReference>
<dbReference type="PDB" id="3WFZ">
    <property type="method" value="X-ray"/>
    <property type="resolution" value="2.60 A"/>
    <property type="chains" value="A/B/C/D=1-751"/>
</dbReference>
<dbReference type="PDBsum" id="2ZUS"/>
<dbReference type="PDBsum" id="2ZUT"/>
<dbReference type="PDBsum" id="2ZUU"/>
<dbReference type="PDBsum" id="2ZUV"/>
<dbReference type="PDBsum" id="2ZUW"/>
<dbReference type="PDBsum" id="3WFZ"/>
<dbReference type="SMR" id="E8MF13"/>
<dbReference type="CAZy" id="GH112">
    <property type="family name" value="Glycoside Hydrolase Family 112"/>
</dbReference>
<dbReference type="GeneID" id="69578839"/>
<dbReference type="KEGG" id="blm:BLLJ_1623"/>
<dbReference type="HOGENOM" id="CLU_022367_0_0_11"/>
<dbReference type="BRENDA" id="2.4.1.211">
    <property type="organism ID" value="851"/>
</dbReference>
<dbReference type="SABIO-RK" id="E8MF13"/>
<dbReference type="EvolutionaryTrace" id="E8MF13"/>
<dbReference type="GO" id="GO:0050500">
    <property type="term" value="F:1,3-beta-galactosyl-N-acetylhexosamine phosphorylase activity"/>
    <property type="evidence" value="ECO:0007669"/>
    <property type="project" value="UniProtKB-EC"/>
</dbReference>
<dbReference type="GO" id="GO:0004645">
    <property type="term" value="F:1,4-alpha-oligoglucan phosphorylase activity"/>
    <property type="evidence" value="ECO:0007669"/>
    <property type="project" value="InterPro"/>
</dbReference>
<dbReference type="GO" id="GO:0005975">
    <property type="term" value="P:carbohydrate metabolic process"/>
    <property type="evidence" value="ECO:0007669"/>
    <property type="project" value="UniProtKB-ARBA"/>
</dbReference>
<dbReference type="Gene3D" id="3.40.50.880">
    <property type="match status" value="1"/>
</dbReference>
<dbReference type="Gene3D" id="3.20.20.80">
    <property type="entry name" value="Glycosidases"/>
    <property type="match status" value="1"/>
</dbReference>
<dbReference type="Gene3D" id="2.60.40.1180">
    <property type="entry name" value="Golgi alpha-mannosidase II"/>
    <property type="match status" value="1"/>
</dbReference>
<dbReference type="Gene3D" id="2.60.40.10">
    <property type="entry name" value="Immunoglobulins"/>
    <property type="match status" value="1"/>
</dbReference>
<dbReference type="InterPro" id="IPR029062">
    <property type="entry name" value="Class_I_gatase-like"/>
</dbReference>
<dbReference type="InterPro" id="IPR013780">
    <property type="entry name" value="Glyco_hydro_b"/>
</dbReference>
<dbReference type="InterPro" id="IPR013783">
    <property type="entry name" value="Ig-like_fold"/>
</dbReference>
<dbReference type="InterPro" id="IPR035080">
    <property type="entry name" value="Lact_bio_phlase-like_N"/>
</dbReference>
<dbReference type="InterPro" id="IPR012711">
    <property type="entry name" value="Lacto-N-biose_phosphorylase"/>
</dbReference>
<dbReference type="InterPro" id="IPR035356">
    <property type="entry name" value="LBP_C"/>
</dbReference>
<dbReference type="InterPro" id="IPR035363">
    <property type="entry name" value="LBP_M"/>
</dbReference>
<dbReference type="NCBIfam" id="TIGR02336">
    <property type="entry name" value="1,3-beta-galactosyl-N-acetylhexosamine phosphorylase"/>
    <property type="match status" value="1"/>
</dbReference>
<dbReference type="Pfam" id="PF09508">
    <property type="entry name" value="Lact_bio_phlase"/>
    <property type="match status" value="1"/>
</dbReference>
<dbReference type="Pfam" id="PF17386">
    <property type="entry name" value="LBP_C"/>
    <property type="match status" value="1"/>
</dbReference>
<dbReference type="Pfam" id="PF17385">
    <property type="entry name" value="LBP_M"/>
    <property type="match status" value="1"/>
</dbReference>
<dbReference type="SUPFAM" id="SSF52317">
    <property type="entry name" value="Class I glutamine amidotransferase-like"/>
    <property type="match status" value="1"/>
</dbReference>
<gene>
    <name type="primary">lnpA</name>
    <name type="synonym">lnbp</name>
    <name type="ordered locus">BLLJ_1623</name>
</gene>
<sequence>MTSTGRFTLPSEENFAEKTKELAELWGADAIRNSDGTHLDEAVLALGKKIYNAYFPTRAHNEWITLHMDETPQVYLLTDRILAESDTVDIPLMESFFAEQLKPNRDADPHKYWEVVDRTTGEVVDSANWTLDADEDTVHVSGVAAWHEYTVSFLAYIIWDPVEMYNHLTNDWGDKEHEIPFDIYHPATRKFVFDTFEQWLKDSPQTDVVRFTTFFYQFTLLFDEKRREKVVDWFGCACTVSPRALDDFEAKYGYRLRPEDFVDGGAYNSAWRVPRKAQRDWIDFLSGFVRENVKQLADMSHAAGKEAMMFLGDQWIGTEPYKDGFDELGLDAVVGSIGDGTTTRMIADIPGVKYTEGRFLPYFFPDTFYEGNDPSIEGLDNWRKARRAILRSPISRMGYGGYLSLAAKFPKFVDTVTHIANEFRDIHDRTGGVAAEGELNVAILNSWGKMRSWMAFTVAHALPNKQTYSYYGILESLSGMRVNVRFISFDDVLAHGIDSDIDVIINGGPVDTAFTGGDVWTNPKLVETVRAWVRGGGAFVGVGEPSSAPRFQTGRFFQLADVIGVDEERYQTLSVDKYFPPVVPDHFITADVPVDPAAREAWEQAGYRIPLSGCGGGQSIKPLGGIDFGEPVLNTYPVNENVTLLRADGGQVQLATNDYGKGRGVYISGLPYSAANARLLERVLFYASHNEDKYAAWSSSNPECEVAHFPEQGLYCVINNTDQPQKTTVTLADGTTEDFDLPDSGIAWREA</sequence>
<name>LNPA_BIFL2</name>
<evidence type="ECO:0000269" key="1">
    <source>
    </source>
</evidence>
<evidence type="ECO:0000269" key="2">
    <source>
    </source>
</evidence>
<evidence type="ECO:0000269" key="3">
    <source>
    </source>
</evidence>
<evidence type="ECO:0000305" key="4"/>
<evidence type="ECO:0000305" key="5">
    <source>
    </source>
</evidence>
<evidence type="ECO:0007829" key="6">
    <source>
        <dbReference type="PDB" id="2ZUV"/>
    </source>
</evidence>
<evidence type="ECO:0007829" key="7">
    <source>
        <dbReference type="PDB" id="2ZUW"/>
    </source>
</evidence>
<organism>
    <name type="scientific">Bifidobacterium longum subsp. longum (strain ATCC 15707 / DSM 20219 / JCM 1217 / NCTC 11818 / E194b)</name>
    <dbReference type="NCBI Taxonomy" id="565042"/>
    <lineage>
        <taxon>Bacteria</taxon>
        <taxon>Bacillati</taxon>
        <taxon>Actinomycetota</taxon>
        <taxon>Actinomycetes</taxon>
        <taxon>Bifidobacteriales</taxon>
        <taxon>Bifidobacteriaceae</taxon>
        <taxon>Bifidobacterium</taxon>
    </lineage>
</organism>
<proteinExistence type="evidence at protein level"/>
<keyword id="KW-0002">3D-structure</keyword>
<keyword id="KW-0119">Carbohydrate metabolism</keyword>
<keyword id="KW-0328">Glycosyltransferase</keyword>
<keyword id="KW-0808">Transferase</keyword>
<reference key="1">
    <citation type="journal article" date="2005" name="Appl. Environ. Microbiol.">
        <title>Novel putative galactose operon involving lacto-N-biose phosphorylase in Bifidobacterium longum.</title>
        <authorList>
            <person name="Kitaoka M."/>
            <person name="Tian J."/>
            <person name="Nishimoto M."/>
        </authorList>
    </citation>
    <scope>NUCLEOTIDE SEQUENCE [GENOMIC DNA]</scope>
    <scope>FUNCTION</scope>
    <scope>CATALYTIC ACTIVITY</scope>
    <scope>GENE NAME</scope>
    <source>
        <strain>ATCC 15707 / DSM 20219 / CCUG 28903 / JCM 1217 / NCIMB 702259 / NCTC 11818 / E194b</strain>
    </source>
</reference>
<reference key="2">
    <citation type="journal article" date="2007" name="Appl. Environ. Microbiol.">
        <title>Identification of N-acetylhexosamine 1-kinase in the complete lacto-N-biose I/galacto-N-biose metabolic pathway in Bifidobacterium longum.</title>
        <authorList>
            <person name="Nishimoto M."/>
            <person name="Kitaoka M."/>
        </authorList>
    </citation>
    <scope>NUCLEOTIDE SEQUENCE [GENOMIC DNA]</scope>
    <scope>FUNCTION</scope>
    <source>
        <strain>ATCC 15707 / DSM 20219 / CCUG 28903 / JCM 1217 / NCIMB 702259 / NCTC 11818 / E194b</strain>
    </source>
</reference>
<reference key="3">
    <citation type="journal article" date="2011" name="Nature">
        <title>Bifidobacteria can protect from enteropathogenic infection through production of acetate.</title>
        <authorList>
            <person name="Fukuda S."/>
            <person name="Toh H."/>
            <person name="Hase K."/>
            <person name="Oshima K."/>
            <person name="Nakanishi Y."/>
            <person name="Yoshimura K."/>
            <person name="Tobe T."/>
            <person name="Clarke J.M."/>
            <person name="Topping D.L."/>
            <person name="Suzuki T."/>
            <person name="Taylor T.D."/>
            <person name="Itoh K."/>
            <person name="Kikuchi J."/>
            <person name="Morita H."/>
            <person name="Hattori M."/>
            <person name="Ohno H."/>
        </authorList>
    </citation>
    <scope>NUCLEOTIDE SEQUENCE [LARGE SCALE GENOMIC DNA]</scope>
    <source>
        <strain>ATCC 15707 / DSM 20219 / CCUG 28903 / JCM 1217 / NCIMB 702259 / NCTC 11818 / E194b</strain>
    </source>
</reference>
<reference key="4">
    <citation type="journal article" date="2009" name="J. Biol. Chem.">
        <title>The crystal structure of galacto-N-biose/lacto-N-biose I phosphorylase: a large deformation of a TIM barrel scaffold.</title>
        <authorList>
            <person name="Hidaka M."/>
            <person name="Nishimoto M."/>
            <person name="Kitaoka M."/>
            <person name="Wakagi T."/>
            <person name="Shoun H."/>
            <person name="Fushinobu S."/>
        </authorList>
    </citation>
    <scope>X-RAY CRYSTALLOGRAPHY (1.85 ANGSTROMS) OF 2-751 IN COMPLEX WITH N-ACETYLGLUCOSAMINE AND N-ACETYLGALACTOSAMINE</scope>
    <scope>FUNCTION</scope>
    <scope>CATALYTIC ACTIVITY</scope>
    <scope>SUBUNIT</scope>
    <scope>ACTIVE SITE</scope>
    <scope>MUTAGENESIS OF ARG-32; ASN-166; ARG-210; ARG-358; TYR-362 AND PHE-364</scope>
    <source>
        <strain>ATCC 15707 / DSM 20219 / CCUG 28903 / JCM 1217 / NCIMB 702259 / NCTC 11818 / E194b</strain>
    </source>
</reference>
<protein>
    <recommendedName>
        <fullName>1,3-beta-galactosyl-N-acetylhexosamine phosphorylase</fullName>
        <ecNumber>2.4.1.211</ecNumber>
    </recommendedName>
    <alternativeName>
        <fullName>Galacto-N-biose/lacto-N-biose I phosphorylase</fullName>
        <shortName>GLNBP</shortName>
    </alternativeName>
</protein>
<accession>E8MF13</accession>
<accession>Q5NU17</accession>